<comment type="subunit">
    <text evidence="1">Homohexamer. The hexamer is formed by a dimer of trimers (By similarity).</text>
</comment>
<comment type="similarity">
    <text evidence="2">To M.jannaschii MJ0989.</text>
</comment>
<feature type="chain" id="PRO_0000168872" description="Protein YchN">
    <location>
        <begin position="1"/>
        <end position="117"/>
    </location>
</feature>
<protein>
    <recommendedName>
        <fullName>Protein YchN</fullName>
    </recommendedName>
</protein>
<organism>
    <name type="scientific">Shigella flexneri</name>
    <dbReference type="NCBI Taxonomy" id="623"/>
    <lineage>
        <taxon>Bacteria</taxon>
        <taxon>Pseudomonadati</taxon>
        <taxon>Pseudomonadota</taxon>
        <taxon>Gammaproteobacteria</taxon>
        <taxon>Enterobacterales</taxon>
        <taxon>Enterobacteriaceae</taxon>
        <taxon>Shigella</taxon>
    </lineage>
</organism>
<reference key="1">
    <citation type="journal article" date="2002" name="Nucleic Acids Res.">
        <title>Genome sequence of Shigella flexneri 2a: insights into pathogenicity through comparison with genomes of Escherichia coli K12 and O157.</title>
        <authorList>
            <person name="Jin Q."/>
            <person name="Yuan Z."/>
            <person name="Xu J."/>
            <person name="Wang Y."/>
            <person name="Shen Y."/>
            <person name="Lu W."/>
            <person name="Wang J."/>
            <person name="Liu H."/>
            <person name="Yang J."/>
            <person name="Yang F."/>
            <person name="Zhang X."/>
            <person name="Zhang J."/>
            <person name="Yang G."/>
            <person name="Wu H."/>
            <person name="Qu D."/>
            <person name="Dong J."/>
            <person name="Sun L."/>
            <person name="Xue Y."/>
            <person name="Zhao A."/>
            <person name="Gao Y."/>
            <person name="Zhu J."/>
            <person name="Kan B."/>
            <person name="Ding K."/>
            <person name="Chen S."/>
            <person name="Cheng H."/>
            <person name="Yao Z."/>
            <person name="He B."/>
            <person name="Chen R."/>
            <person name="Ma D."/>
            <person name="Qiang B."/>
            <person name="Wen Y."/>
            <person name="Hou Y."/>
            <person name="Yu J."/>
        </authorList>
    </citation>
    <scope>NUCLEOTIDE SEQUENCE [LARGE SCALE GENOMIC DNA]</scope>
    <source>
        <strain>301 / Serotype 2a</strain>
    </source>
</reference>
<reference key="2">
    <citation type="journal article" date="2003" name="Infect. Immun.">
        <title>Complete genome sequence and comparative genomics of Shigella flexneri serotype 2a strain 2457T.</title>
        <authorList>
            <person name="Wei J."/>
            <person name="Goldberg M.B."/>
            <person name="Burland V."/>
            <person name="Venkatesan M.M."/>
            <person name="Deng W."/>
            <person name="Fournier G."/>
            <person name="Mayhew G.F."/>
            <person name="Plunkett G. III"/>
            <person name="Rose D.J."/>
            <person name="Darling A."/>
            <person name="Mau B."/>
            <person name="Perna N.T."/>
            <person name="Payne S.M."/>
            <person name="Runyen-Janecky L.J."/>
            <person name="Zhou S."/>
            <person name="Schwartz D.C."/>
            <person name="Blattner F.R."/>
        </authorList>
    </citation>
    <scope>NUCLEOTIDE SEQUENCE [LARGE SCALE GENOMIC DNA]</scope>
    <source>
        <strain>ATCC 700930 / 2457T / Serotype 2a</strain>
    </source>
</reference>
<gene>
    <name type="primary">ychN</name>
    <name type="ordered locus">SF1222</name>
    <name type="ordered locus">S1306</name>
</gene>
<name>YCHN_SHIFL</name>
<accession>P0AB54</accession>
<accession>P39164</accession>
<accession>P76021</accession>
<sequence>MQKIVIVANGAPYGSESLFNSLRLAIALREQESNLDLRLFLMSDAVTAGLRGQKPGEGYNIQQMLEILTAQNVPVKLCKTCTDGRGISTLPLIDGVEIGTLVELAQWTLSADKVLTF</sequence>
<keyword id="KW-1185">Reference proteome</keyword>
<proteinExistence type="inferred from homology"/>
<evidence type="ECO:0000250" key="1"/>
<evidence type="ECO:0000305" key="2"/>
<dbReference type="EMBL" id="AE005674">
    <property type="protein sequence ID" value="AAN42835.1"/>
    <property type="molecule type" value="Genomic_DNA"/>
</dbReference>
<dbReference type="EMBL" id="AE014073">
    <property type="protein sequence ID" value="AAP16721.1"/>
    <property type="molecule type" value="Genomic_DNA"/>
</dbReference>
<dbReference type="RefSeq" id="NP_707128.1">
    <property type="nucleotide sequence ID" value="NC_004337.2"/>
</dbReference>
<dbReference type="RefSeq" id="WP_001169669.1">
    <property type="nucleotide sequence ID" value="NZ_WPGW01000029.1"/>
</dbReference>
<dbReference type="SMR" id="P0AB54"/>
<dbReference type="STRING" id="198214.SF1222"/>
<dbReference type="PaxDb" id="198214-SF1222"/>
<dbReference type="GeneID" id="1024181"/>
<dbReference type="GeneID" id="93775287"/>
<dbReference type="KEGG" id="sfl:SF1222"/>
<dbReference type="KEGG" id="sfx:S1306"/>
<dbReference type="PATRIC" id="fig|198214.7.peg.1440"/>
<dbReference type="HOGENOM" id="CLU_151801_2_0_6"/>
<dbReference type="Proteomes" id="UP000001006">
    <property type="component" value="Chromosome"/>
</dbReference>
<dbReference type="Proteomes" id="UP000002673">
    <property type="component" value="Chromosome"/>
</dbReference>
<dbReference type="GO" id="GO:0005829">
    <property type="term" value="C:cytosol"/>
    <property type="evidence" value="ECO:0007669"/>
    <property type="project" value="TreeGrafter"/>
</dbReference>
<dbReference type="FunFam" id="3.40.1260.10:FF:000003">
    <property type="entry name" value="DsrE/DsrF-like family protein"/>
    <property type="match status" value="1"/>
</dbReference>
<dbReference type="Gene3D" id="3.40.1260.10">
    <property type="entry name" value="DsrEFH-like"/>
    <property type="match status" value="1"/>
</dbReference>
<dbReference type="InterPro" id="IPR027396">
    <property type="entry name" value="DsrEFH-like"/>
</dbReference>
<dbReference type="InterPro" id="IPR003787">
    <property type="entry name" value="Sulphur_relay_DsrE/F-like"/>
</dbReference>
<dbReference type="PANTHER" id="PTHR34874">
    <property type="entry name" value="PROTEIN YCHN"/>
    <property type="match status" value="1"/>
</dbReference>
<dbReference type="PANTHER" id="PTHR34874:SF1">
    <property type="entry name" value="PROTEIN YCHN"/>
    <property type="match status" value="1"/>
</dbReference>
<dbReference type="Pfam" id="PF02635">
    <property type="entry name" value="DsrE"/>
    <property type="match status" value="1"/>
</dbReference>
<dbReference type="SUPFAM" id="SSF75169">
    <property type="entry name" value="DsrEFH-like"/>
    <property type="match status" value="1"/>
</dbReference>